<dbReference type="EMBL" id="AE014074">
    <property type="protein sequence ID" value="AAM79684.1"/>
    <property type="molecule type" value="Genomic_DNA"/>
</dbReference>
<dbReference type="RefSeq" id="WP_002989164.1">
    <property type="nucleotide sequence ID" value="NC_004070.1"/>
</dbReference>
<dbReference type="SMR" id="P0DG92"/>
<dbReference type="KEGG" id="spg:SpyM3_1077"/>
<dbReference type="HOGENOM" id="CLU_135650_0_3_9"/>
<dbReference type="Proteomes" id="UP000000564">
    <property type="component" value="Chromosome"/>
</dbReference>
<dbReference type="CDD" id="cd10456">
    <property type="entry name" value="GIY-YIG_UPF0213"/>
    <property type="match status" value="1"/>
</dbReference>
<dbReference type="Gene3D" id="3.40.1440.10">
    <property type="entry name" value="GIY-YIG endonuclease"/>
    <property type="match status" value="1"/>
</dbReference>
<dbReference type="InterPro" id="IPR000305">
    <property type="entry name" value="GIY-YIG_endonuc"/>
</dbReference>
<dbReference type="InterPro" id="IPR035901">
    <property type="entry name" value="GIY-YIG_endonuc_sf"/>
</dbReference>
<dbReference type="InterPro" id="IPR050190">
    <property type="entry name" value="UPF0213_domain"/>
</dbReference>
<dbReference type="PANTHER" id="PTHR34477">
    <property type="entry name" value="UPF0213 PROTEIN YHBQ"/>
    <property type="match status" value="1"/>
</dbReference>
<dbReference type="PANTHER" id="PTHR34477:SF1">
    <property type="entry name" value="UPF0213 PROTEIN YHBQ"/>
    <property type="match status" value="1"/>
</dbReference>
<dbReference type="Pfam" id="PF01541">
    <property type="entry name" value="GIY-YIG"/>
    <property type="match status" value="1"/>
</dbReference>
<dbReference type="SUPFAM" id="SSF82771">
    <property type="entry name" value="GIY-YIG endonuclease"/>
    <property type="match status" value="1"/>
</dbReference>
<dbReference type="PROSITE" id="PS50164">
    <property type="entry name" value="GIY_YIG"/>
    <property type="match status" value="1"/>
</dbReference>
<organism>
    <name type="scientific">Streptococcus pyogenes serotype M3 (strain ATCC BAA-595 / MGAS315)</name>
    <dbReference type="NCBI Taxonomy" id="198466"/>
    <lineage>
        <taxon>Bacteria</taxon>
        <taxon>Bacillati</taxon>
        <taxon>Bacillota</taxon>
        <taxon>Bacilli</taxon>
        <taxon>Lactobacillales</taxon>
        <taxon>Streptococcaceae</taxon>
        <taxon>Streptococcus</taxon>
    </lineage>
</organism>
<feature type="chain" id="PRO_0000161395" description="UPF0213 protein SpyM3_1077">
    <location>
        <begin position="1"/>
        <end position="92"/>
    </location>
</feature>
<feature type="domain" description="GIY-YIG" evidence="1">
    <location>
        <begin position="4"/>
        <end position="80"/>
    </location>
</feature>
<gene>
    <name type="ordered locus">SpyM3_1077</name>
</gene>
<name>Y1077_STRP3</name>
<proteinExistence type="inferred from homology"/>
<accession>P0DG92</accession>
<accession>P67355</accession>
<accession>Q99Z40</accession>
<reference key="1">
    <citation type="journal article" date="2002" name="Proc. Natl. Acad. Sci. U.S.A.">
        <title>Genome sequence of a serotype M3 strain of group A Streptococcus: phage-encoded toxins, the high-virulence phenotype, and clone emergence.</title>
        <authorList>
            <person name="Beres S.B."/>
            <person name="Sylva G.L."/>
            <person name="Barbian K.D."/>
            <person name="Lei B."/>
            <person name="Hoff J.S."/>
            <person name="Mammarella N.D."/>
            <person name="Liu M.-Y."/>
            <person name="Smoot J.C."/>
            <person name="Porcella S.F."/>
            <person name="Parkins L.D."/>
            <person name="Campbell D.S."/>
            <person name="Smith T.M."/>
            <person name="McCormick J.K."/>
            <person name="Leung D.Y.M."/>
            <person name="Schlievert P.M."/>
            <person name="Musser J.M."/>
        </authorList>
    </citation>
    <scope>NUCLEOTIDE SEQUENCE [LARGE SCALE GENOMIC DNA]</scope>
    <source>
        <strain>ATCC BAA-595 / MGAS315</strain>
    </source>
</reference>
<sequence>MTTKKAYMYVLECVDKTLYTGYTTDLKKRLATHNAGKGAKYTRYRLPVSLLYYEVFDSKEAAMSAEALFKKRKTRSQKLAYIATHQKEKKNH</sequence>
<protein>
    <recommendedName>
        <fullName>UPF0213 protein SpyM3_1077</fullName>
    </recommendedName>
</protein>
<comment type="similarity">
    <text evidence="2">Belongs to the UPF0213 family.</text>
</comment>
<evidence type="ECO:0000255" key="1">
    <source>
        <dbReference type="PROSITE-ProRule" id="PRU00977"/>
    </source>
</evidence>
<evidence type="ECO:0000305" key="2"/>